<protein>
    <recommendedName>
        <fullName>Protocadherin beta-3</fullName>
        <shortName>PCDH-beta-3</shortName>
    </recommendedName>
</protein>
<feature type="signal peptide" evidence="2">
    <location>
        <begin position="1"/>
        <end position="26"/>
    </location>
</feature>
<feature type="chain" id="PRO_0000003918" description="Protocadherin beta-3">
    <location>
        <begin position="27"/>
        <end position="796"/>
    </location>
</feature>
<feature type="topological domain" description="Extracellular" evidence="2">
    <location>
        <begin position="27"/>
        <end position="690"/>
    </location>
</feature>
<feature type="transmembrane region" description="Helical" evidence="2">
    <location>
        <begin position="691"/>
        <end position="711"/>
    </location>
</feature>
<feature type="topological domain" description="Cytoplasmic" evidence="2">
    <location>
        <begin position="712"/>
        <end position="796"/>
    </location>
</feature>
<feature type="domain" description="Cadherin 1" evidence="3">
    <location>
        <begin position="35"/>
        <end position="133"/>
    </location>
</feature>
<feature type="domain" description="Cadherin 2" evidence="3">
    <location>
        <begin position="138"/>
        <end position="242"/>
    </location>
</feature>
<feature type="domain" description="Cadherin 3" evidence="3">
    <location>
        <begin position="247"/>
        <end position="347"/>
    </location>
</feature>
<feature type="domain" description="Cadherin 4" evidence="3">
    <location>
        <begin position="352"/>
        <end position="451"/>
    </location>
</feature>
<feature type="domain" description="Cadherin 5" evidence="3">
    <location>
        <begin position="456"/>
        <end position="561"/>
    </location>
</feature>
<feature type="domain" description="Cadherin 6" evidence="3">
    <location>
        <begin position="568"/>
        <end position="671"/>
    </location>
</feature>
<feature type="glycosylation site" description="N-linked (GlcNAc...) asparagine" evidence="2">
    <location>
        <position position="169"/>
    </location>
</feature>
<feature type="glycosylation site" description="N-linked (GlcNAc...) asparagine" evidence="2">
    <location>
        <position position="418"/>
    </location>
</feature>
<feature type="glycosylation site" description="N-linked (GlcNAc...) asparagine" evidence="2">
    <location>
        <position position="436"/>
    </location>
</feature>
<feature type="glycosylation site" description="N-linked (GlcNAc...) asparagine" evidence="2">
    <location>
        <position position="567"/>
    </location>
</feature>
<feature type="sequence variant" id="VAR_024391" description="In dbSNP:rs31849.">
    <original>K</original>
    <variation>R</variation>
    <location>
        <position position="41"/>
    </location>
</feature>
<feature type="sequence variant" id="VAR_033703" description="In dbSNP:rs12515688.">
    <original>E</original>
    <variation>K</variation>
    <location>
        <position position="207"/>
    </location>
</feature>
<feature type="sequence variant" id="VAR_020366" description="In dbSNP:rs3733699.">
    <original>R</original>
    <variation>S</variation>
    <location>
        <position position="414"/>
    </location>
</feature>
<feature type="sequence conflict" description="In Ref. 1; AAD43757, 2; AAK51622, 3; BAG36239 and 5; EAW61981." evidence="4" ref="1 2 3 5">
    <original>P</original>
    <variation>R</variation>
    <location>
        <position position="202"/>
    </location>
</feature>
<dbReference type="EMBL" id="AF152496">
    <property type="protein sequence ID" value="AAD43757.1"/>
    <property type="molecule type" value="mRNA"/>
</dbReference>
<dbReference type="EMBL" id="AF217755">
    <property type="protein sequence ID" value="AAK51622.1"/>
    <property type="molecule type" value="mRNA"/>
</dbReference>
<dbReference type="EMBL" id="AK313451">
    <property type="protein sequence ID" value="BAG36239.1"/>
    <property type="molecule type" value="mRNA"/>
</dbReference>
<dbReference type="EMBL" id="AC244517">
    <property type="status" value="NOT_ANNOTATED_CDS"/>
    <property type="molecule type" value="Genomic_DNA"/>
</dbReference>
<dbReference type="EMBL" id="CH471062">
    <property type="protein sequence ID" value="EAW61981.1"/>
    <property type="molecule type" value="Genomic_DNA"/>
</dbReference>
<dbReference type="CCDS" id="CCDS4245.1"/>
<dbReference type="RefSeq" id="NP_061760.2">
    <property type="nucleotide sequence ID" value="NM_018937.5"/>
</dbReference>
<dbReference type="SMR" id="Q9Y5E6"/>
<dbReference type="BioGRID" id="121072">
    <property type="interactions" value="171"/>
</dbReference>
<dbReference type="FunCoup" id="Q9Y5E6">
    <property type="interactions" value="73"/>
</dbReference>
<dbReference type="IntAct" id="Q9Y5E6">
    <property type="interactions" value="141"/>
</dbReference>
<dbReference type="STRING" id="9606.ENSP00000231130"/>
<dbReference type="GlyConnect" id="1682">
    <property type="glycosylation" value="1 N-Linked glycan (1 site)"/>
</dbReference>
<dbReference type="GlyCosmos" id="Q9Y5E6">
    <property type="glycosylation" value="4 sites, 1 glycan"/>
</dbReference>
<dbReference type="GlyGen" id="Q9Y5E6">
    <property type="glycosylation" value="5 sites, 1 N-linked glycan (1 site)"/>
</dbReference>
<dbReference type="iPTMnet" id="Q9Y5E6"/>
<dbReference type="PhosphoSitePlus" id="Q9Y5E6"/>
<dbReference type="BioMuta" id="PCDHB3"/>
<dbReference type="DMDM" id="13431377"/>
<dbReference type="jPOST" id="Q9Y5E6"/>
<dbReference type="MassIVE" id="Q9Y5E6"/>
<dbReference type="PaxDb" id="9606-ENSP00000231130"/>
<dbReference type="PeptideAtlas" id="Q9Y5E6"/>
<dbReference type="ProteomicsDB" id="86345"/>
<dbReference type="Antibodypedia" id="27186">
    <property type="antibodies" value="99 antibodies from 20 providers"/>
</dbReference>
<dbReference type="DNASU" id="56132"/>
<dbReference type="Ensembl" id="ENST00000231130.3">
    <property type="protein sequence ID" value="ENSP00000231130.2"/>
    <property type="gene ID" value="ENSG00000113205.5"/>
</dbReference>
<dbReference type="GeneID" id="56132"/>
<dbReference type="KEGG" id="hsa:56132"/>
<dbReference type="MANE-Select" id="ENST00000231130.3">
    <property type="protein sequence ID" value="ENSP00000231130.2"/>
    <property type="RefSeq nucleotide sequence ID" value="NM_018937.5"/>
    <property type="RefSeq protein sequence ID" value="NP_061760.2"/>
</dbReference>
<dbReference type="UCSC" id="uc003lio.5">
    <property type="organism name" value="human"/>
</dbReference>
<dbReference type="AGR" id="HGNC:8688"/>
<dbReference type="CTD" id="56132"/>
<dbReference type="DisGeNET" id="56132"/>
<dbReference type="GeneCards" id="PCDHB3"/>
<dbReference type="HGNC" id="HGNC:8688">
    <property type="gene designation" value="PCDHB3"/>
</dbReference>
<dbReference type="HPA" id="ENSG00000113205">
    <property type="expression patterns" value="Low tissue specificity"/>
</dbReference>
<dbReference type="MIM" id="604967">
    <property type="type" value="gene"/>
</dbReference>
<dbReference type="MIM" id="606329">
    <property type="type" value="gene"/>
</dbReference>
<dbReference type="neXtProt" id="NX_Q9Y5E6"/>
<dbReference type="OpenTargets" id="ENSG00000113205"/>
<dbReference type="PharmGKB" id="PA33037"/>
<dbReference type="VEuPathDB" id="HostDB:ENSG00000113205"/>
<dbReference type="eggNOG" id="KOG3594">
    <property type="taxonomic scope" value="Eukaryota"/>
</dbReference>
<dbReference type="GeneTree" id="ENSGT00940000161193"/>
<dbReference type="InParanoid" id="Q9Y5E6"/>
<dbReference type="OMA" id="DNGRIMC"/>
<dbReference type="OrthoDB" id="6252479at2759"/>
<dbReference type="PAN-GO" id="Q9Y5E6">
    <property type="GO annotations" value="2 GO annotations based on evolutionary models"/>
</dbReference>
<dbReference type="PhylomeDB" id="Q9Y5E6"/>
<dbReference type="TreeFam" id="TF332299"/>
<dbReference type="PathwayCommons" id="Q9Y5E6"/>
<dbReference type="SignaLink" id="Q9Y5E6"/>
<dbReference type="BioGRID-ORCS" id="56132">
    <property type="hits" value="24 hits in 1114 CRISPR screens"/>
</dbReference>
<dbReference type="GeneWiki" id="PCDHB3"/>
<dbReference type="GenomeRNAi" id="56132"/>
<dbReference type="Pharos" id="Q9Y5E6">
    <property type="development level" value="Tdark"/>
</dbReference>
<dbReference type="PRO" id="PR:Q9Y5E6"/>
<dbReference type="Proteomes" id="UP000005640">
    <property type="component" value="Chromosome 5"/>
</dbReference>
<dbReference type="RNAct" id="Q9Y5E6">
    <property type="molecule type" value="protein"/>
</dbReference>
<dbReference type="Bgee" id="ENSG00000113205">
    <property type="expression patterns" value="Expressed in male germ line stem cell (sensu Vertebrata) in testis and 91 other cell types or tissues"/>
</dbReference>
<dbReference type="ExpressionAtlas" id="Q9Y5E6">
    <property type="expression patterns" value="baseline and differential"/>
</dbReference>
<dbReference type="GO" id="GO:0016020">
    <property type="term" value="C:membrane"/>
    <property type="evidence" value="ECO:0000303"/>
    <property type="project" value="UniProtKB"/>
</dbReference>
<dbReference type="GO" id="GO:0005886">
    <property type="term" value="C:plasma membrane"/>
    <property type="evidence" value="ECO:0000318"/>
    <property type="project" value="GO_Central"/>
</dbReference>
<dbReference type="GO" id="GO:0045202">
    <property type="term" value="C:synapse"/>
    <property type="evidence" value="ECO:0007669"/>
    <property type="project" value="GOC"/>
</dbReference>
<dbReference type="GO" id="GO:0005509">
    <property type="term" value="F:calcium ion binding"/>
    <property type="evidence" value="ECO:0007669"/>
    <property type="project" value="InterPro"/>
</dbReference>
<dbReference type="GO" id="GO:0016339">
    <property type="term" value="P:calcium-dependent cell-cell adhesion via plasma membrane cell adhesion molecules"/>
    <property type="evidence" value="ECO:0000303"/>
    <property type="project" value="UniProtKB"/>
</dbReference>
<dbReference type="GO" id="GO:0007155">
    <property type="term" value="P:cell adhesion"/>
    <property type="evidence" value="ECO:0000318"/>
    <property type="project" value="GO_Central"/>
</dbReference>
<dbReference type="GO" id="GO:0007268">
    <property type="term" value="P:chemical synaptic transmission"/>
    <property type="evidence" value="ECO:0000304"/>
    <property type="project" value="UniProtKB"/>
</dbReference>
<dbReference type="GO" id="GO:0007156">
    <property type="term" value="P:homophilic cell adhesion via plasma membrane adhesion molecules"/>
    <property type="evidence" value="ECO:0007669"/>
    <property type="project" value="InterPro"/>
</dbReference>
<dbReference type="GO" id="GO:0007399">
    <property type="term" value="P:nervous system development"/>
    <property type="evidence" value="ECO:0000304"/>
    <property type="project" value="ProtInc"/>
</dbReference>
<dbReference type="GO" id="GO:0007416">
    <property type="term" value="P:synapse assembly"/>
    <property type="evidence" value="ECO:0000304"/>
    <property type="project" value="UniProtKB"/>
</dbReference>
<dbReference type="CDD" id="cd11304">
    <property type="entry name" value="Cadherin_repeat"/>
    <property type="match status" value="5"/>
</dbReference>
<dbReference type="FunFam" id="2.60.40.60:FF:000001">
    <property type="entry name" value="Protocadherin alpha 2"/>
    <property type="match status" value="1"/>
</dbReference>
<dbReference type="FunFam" id="2.60.40.60:FF:000002">
    <property type="entry name" value="Protocadherin alpha 2"/>
    <property type="match status" value="1"/>
</dbReference>
<dbReference type="FunFam" id="2.60.40.60:FF:000006">
    <property type="entry name" value="Protocadherin alpha 2"/>
    <property type="match status" value="1"/>
</dbReference>
<dbReference type="FunFam" id="2.60.40.60:FF:000046">
    <property type="entry name" value="Protocadherin beta 5"/>
    <property type="match status" value="1"/>
</dbReference>
<dbReference type="FunFam" id="2.60.40.60:FF:000309">
    <property type="entry name" value="Protocadherin beta-8"/>
    <property type="match status" value="1"/>
</dbReference>
<dbReference type="FunFam" id="2.60.40.60:FF:000018">
    <property type="entry name" value="Protocadherin gamma c3"/>
    <property type="match status" value="1"/>
</dbReference>
<dbReference type="Gene3D" id="2.60.40.60">
    <property type="entry name" value="Cadherins"/>
    <property type="match status" value="6"/>
</dbReference>
<dbReference type="InterPro" id="IPR002126">
    <property type="entry name" value="Cadherin-like_dom"/>
</dbReference>
<dbReference type="InterPro" id="IPR015919">
    <property type="entry name" value="Cadherin-like_sf"/>
</dbReference>
<dbReference type="InterPro" id="IPR032455">
    <property type="entry name" value="Cadherin_C"/>
</dbReference>
<dbReference type="InterPro" id="IPR020894">
    <property type="entry name" value="Cadherin_CS"/>
</dbReference>
<dbReference type="InterPro" id="IPR013164">
    <property type="entry name" value="Cadherin_N"/>
</dbReference>
<dbReference type="InterPro" id="IPR050174">
    <property type="entry name" value="Protocadherin/Cadherin-CA"/>
</dbReference>
<dbReference type="PANTHER" id="PTHR24028">
    <property type="entry name" value="CADHERIN-87A"/>
    <property type="match status" value="1"/>
</dbReference>
<dbReference type="PANTHER" id="PTHR24028:SF302">
    <property type="entry name" value="PROTOCADHERIN BETA-3"/>
    <property type="match status" value="1"/>
</dbReference>
<dbReference type="Pfam" id="PF00028">
    <property type="entry name" value="Cadherin"/>
    <property type="match status" value="5"/>
</dbReference>
<dbReference type="Pfam" id="PF08266">
    <property type="entry name" value="Cadherin_2"/>
    <property type="match status" value="1"/>
</dbReference>
<dbReference type="Pfam" id="PF16492">
    <property type="entry name" value="Cadherin_C_2"/>
    <property type="match status" value="1"/>
</dbReference>
<dbReference type="PRINTS" id="PR00205">
    <property type="entry name" value="CADHERIN"/>
</dbReference>
<dbReference type="SMART" id="SM00112">
    <property type="entry name" value="CA"/>
    <property type="match status" value="6"/>
</dbReference>
<dbReference type="SUPFAM" id="SSF49313">
    <property type="entry name" value="Cadherin-like"/>
    <property type="match status" value="6"/>
</dbReference>
<dbReference type="PROSITE" id="PS00232">
    <property type="entry name" value="CADHERIN_1"/>
    <property type="match status" value="5"/>
</dbReference>
<dbReference type="PROSITE" id="PS50268">
    <property type="entry name" value="CADHERIN_2"/>
    <property type="match status" value="6"/>
</dbReference>
<keyword id="KW-0106">Calcium</keyword>
<keyword id="KW-0130">Cell adhesion</keyword>
<keyword id="KW-1003">Cell membrane</keyword>
<keyword id="KW-0325">Glycoprotein</keyword>
<keyword id="KW-0472">Membrane</keyword>
<keyword id="KW-1267">Proteomics identification</keyword>
<keyword id="KW-1185">Reference proteome</keyword>
<keyword id="KW-0677">Repeat</keyword>
<keyword id="KW-0732">Signal</keyword>
<keyword id="KW-0812">Transmembrane</keyword>
<keyword id="KW-1133">Transmembrane helix</keyword>
<name>PCDB3_HUMAN</name>
<proteinExistence type="evidence at protein level"/>
<comment type="function">
    <text>Potential calcium-dependent cell-adhesion protein. May be involved in the establishment and maintenance of specific neuronal connections in the brain.</text>
</comment>
<comment type="interaction">
    <interactant intactId="EBI-24224850">
        <id>Q9Y5E6</id>
    </interactant>
    <interactant intactId="EBI-11139477">
        <id>Q96N21</id>
        <label>TEPSIN</label>
    </interactant>
    <organismsDiffer>false</organismsDiffer>
    <experiments>3</experiments>
</comment>
<comment type="subcellular location">
    <subcellularLocation>
        <location evidence="1">Cell membrane</location>
        <topology evidence="1">Single-pass type I membrane protein</topology>
    </subcellularLocation>
</comment>
<reference key="1">
    <citation type="journal article" date="1999" name="Cell">
        <title>A striking organization of a large family of human neural cadherin-like cell adhesion genes.</title>
        <authorList>
            <person name="Wu Q."/>
            <person name="Maniatis T."/>
        </authorList>
    </citation>
    <scope>NUCLEOTIDE SEQUENCE [MRNA]</scope>
</reference>
<reference key="2">
    <citation type="journal article" date="2001" name="FEBS Lett.">
        <title>The human and murine protocadherin-beta one-exon gene families show high evolutionary conservation, despite the difference in gene number.</title>
        <authorList>
            <person name="Vanhalst K."/>
            <person name="Kools P."/>
            <person name="Vanden Eynde E."/>
            <person name="van Roy F."/>
        </authorList>
    </citation>
    <scope>NUCLEOTIDE SEQUENCE [MRNA]</scope>
</reference>
<reference key="3">
    <citation type="journal article" date="2004" name="Nat. Genet.">
        <title>Complete sequencing and characterization of 21,243 full-length human cDNAs.</title>
        <authorList>
            <person name="Ota T."/>
            <person name="Suzuki Y."/>
            <person name="Nishikawa T."/>
            <person name="Otsuki T."/>
            <person name="Sugiyama T."/>
            <person name="Irie R."/>
            <person name="Wakamatsu A."/>
            <person name="Hayashi K."/>
            <person name="Sato H."/>
            <person name="Nagai K."/>
            <person name="Kimura K."/>
            <person name="Makita H."/>
            <person name="Sekine M."/>
            <person name="Obayashi M."/>
            <person name="Nishi T."/>
            <person name="Shibahara T."/>
            <person name="Tanaka T."/>
            <person name="Ishii S."/>
            <person name="Yamamoto J."/>
            <person name="Saito K."/>
            <person name="Kawai Y."/>
            <person name="Isono Y."/>
            <person name="Nakamura Y."/>
            <person name="Nagahari K."/>
            <person name="Murakami K."/>
            <person name="Yasuda T."/>
            <person name="Iwayanagi T."/>
            <person name="Wagatsuma M."/>
            <person name="Shiratori A."/>
            <person name="Sudo H."/>
            <person name="Hosoiri T."/>
            <person name="Kaku Y."/>
            <person name="Kodaira H."/>
            <person name="Kondo H."/>
            <person name="Sugawara M."/>
            <person name="Takahashi M."/>
            <person name="Kanda K."/>
            <person name="Yokoi T."/>
            <person name="Furuya T."/>
            <person name="Kikkawa E."/>
            <person name="Omura Y."/>
            <person name="Abe K."/>
            <person name="Kamihara K."/>
            <person name="Katsuta N."/>
            <person name="Sato K."/>
            <person name="Tanikawa M."/>
            <person name="Yamazaki M."/>
            <person name="Ninomiya K."/>
            <person name="Ishibashi T."/>
            <person name="Yamashita H."/>
            <person name="Murakawa K."/>
            <person name="Fujimori K."/>
            <person name="Tanai H."/>
            <person name="Kimata M."/>
            <person name="Watanabe M."/>
            <person name="Hiraoka S."/>
            <person name="Chiba Y."/>
            <person name="Ishida S."/>
            <person name="Ono Y."/>
            <person name="Takiguchi S."/>
            <person name="Watanabe S."/>
            <person name="Yosida M."/>
            <person name="Hotuta T."/>
            <person name="Kusano J."/>
            <person name="Kanehori K."/>
            <person name="Takahashi-Fujii A."/>
            <person name="Hara H."/>
            <person name="Tanase T.-O."/>
            <person name="Nomura Y."/>
            <person name="Togiya S."/>
            <person name="Komai F."/>
            <person name="Hara R."/>
            <person name="Takeuchi K."/>
            <person name="Arita M."/>
            <person name="Imose N."/>
            <person name="Musashino K."/>
            <person name="Yuuki H."/>
            <person name="Oshima A."/>
            <person name="Sasaki N."/>
            <person name="Aotsuka S."/>
            <person name="Yoshikawa Y."/>
            <person name="Matsunawa H."/>
            <person name="Ichihara T."/>
            <person name="Shiohata N."/>
            <person name="Sano S."/>
            <person name="Moriya S."/>
            <person name="Momiyama H."/>
            <person name="Satoh N."/>
            <person name="Takami S."/>
            <person name="Terashima Y."/>
            <person name="Suzuki O."/>
            <person name="Nakagawa S."/>
            <person name="Senoh A."/>
            <person name="Mizoguchi H."/>
            <person name="Goto Y."/>
            <person name="Shimizu F."/>
            <person name="Wakebe H."/>
            <person name="Hishigaki H."/>
            <person name="Watanabe T."/>
            <person name="Sugiyama A."/>
            <person name="Takemoto M."/>
            <person name="Kawakami B."/>
            <person name="Yamazaki M."/>
            <person name="Watanabe K."/>
            <person name="Kumagai A."/>
            <person name="Itakura S."/>
            <person name="Fukuzumi Y."/>
            <person name="Fujimori Y."/>
            <person name="Komiyama M."/>
            <person name="Tashiro H."/>
            <person name="Tanigami A."/>
            <person name="Fujiwara T."/>
            <person name="Ono T."/>
            <person name="Yamada K."/>
            <person name="Fujii Y."/>
            <person name="Ozaki K."/>
            <person name="Hirao M."/>
            <person name="Ohmori Y."/>
            <person name="Kawabata A."/>
            <person name="Hikiji T."/>
            <person name="Kobatake N."/>
            <person name="Inagaki H."/>
            <person name="Ikema Y."/>
            <person name="Okamoto S."/>
            <person name="Okitani R."/>
            <person name="Kawakami T."/>
            <person name="Noguchi S."/>
            <person name="Itoh T."/>
            <person name="Shigeta K."/>
            <person name="Senba T."/>
            <person name="Matsumura K."/>
            <person name="Nakajima Y."/>
            <person name="Mizuno T."/>
            <person name="Morinaga M."/>
            <person name="Sasaki M."/>
            <person name="Togashi T."/>
            <person name="Oyama M."/>
            <person name="Hata H."/>
            <person name="Watanabe M."/>
            <person name="Komatsu T."/>
            <person name="Mizushima-Sugano J."/>
            <person name="Satoh T."/>
            <person name="Shirai Y."/>
            <person name="Takahashi Y."/>
            <person name="Nakagawa K."/>
            <person name="Okumura K."/>
            <person name="Nagase T."/>
            <person name="Nomura N."/>
            <person name="Kikuchi H."/>
            <person name="Masuho Y."/>
            <person name="Yamashita R."/>
            <person name="Nakai K."/>
            <person name="Yada T."/>
            <person name="Nakamura Y."/>
            <person name="Ohara O."/>
            <person name="Isogai T."/>
            <person name="Sugano S."/>
        </authorList>
    </citation>
    <scope>NUCLEOTIDE SEQUENCE [LARGE SCALE MRNA]</scope>
    <source>
        <tissue>Brain</tissue>
    </source>
</reference>
<reference key="4">
    <citation type="journal article" date="2004" name="Nature">
        <title>The DNA sequence and comparative analysis of human chromosome 5.</title>
        <authorList>
            <person name="Schmutz J."/>
            <person name="Martin J."/>
            <person name="Terry A."/>
            <person name="Couronne O."/>
            <person name="Grimwood J."/>
            <person name="Lowry S."/>
            <person name="Gordon L.A."/>
            <person name="Scott D."/>
            <person name="Xie G."/>
            <person name="Huang W."/>
            <person name="Hellsten U."/>
            <person name="Tran-Gyamfi M."/>
            <person name="She X."/>
            <person name="Prabhakar S."/>
            <person name="Aerts A."/>
            <person name="Altherr M."/>
            <person name="Bajorek E."/>
            <person name="Black S."/>
            <person name="Branscomb E."/>
            <person name="Caoile C."/>
            <person name="Challacombe J.F."/>
            <person name="Chan Y.M."/>
            <person name="Denys M."/>
            <person name="Detter J.C."/>
            <person name="Escobar J."/>
            <person name="Flowers D."/>
            <person name="Fotopulos D."/>
            <person name="Glavina T."/>
            <person name="Gomez M."/>
            <person name="Gonzales E."/>
            <person name="Goodstein D."/>
            <person name="Grigoriev I."/>
            <person name="Groza M."/>
            <person name="Hammon N."/>
            <person name="Hawkins T."/>
            <person name="Haydu L."/>
            <person name="Israni S."/>
            <person name="Jett J."/>
            <person name="Kadner K."/>
            <person name="Kimball H."/>
            <person name="Kobayashi A."/>
            <person name="Lopez F."/>
            <person name="Lou Y."/>
            <person name="Martinez D."/>
            <person name="Medina C."/>
            <person name="Morgan J."/>
            <person name="Nandkeshwar R."/>
            <person name="Noonan J.P."/>
            <person name="Pitluck S."/>
            <person name="Pollard M."/>
            <person name="Predki P."/>
            <person name="Priest J."/>
            <person name="Ramirez L."/>
            <person name="Retterer J."/>
            <person name="Rodriguez A."/>
            <person name="Rogers S."/>
            <person name="Salamov A."/>
            <person name="Salazar A."/>
            <person name="Thayer N."/>
            <person name="Tice H."/>
            <person name="Tsai M."/>
            <person name="Ustaszewska A."/>
            <person name="Vo N."/>
            <person name="Wheeler J."/>
            <person name="Wu K."/>
            <person name="Yang J."/>
            <person name="Dickson M."/>
            <person name="Cheng J.-F."/>
            <person name="Eichler E.E."/>
            <person name="Olsen A."/>
            <person name="Pennacchio L.A."/>
            <person name="Rokhsar D.S."/>
            <person name="Richardson P."/>
            <person name="Lucas S.M."/>
            <person name="Myers R.M."/>
            <person name="Rubin E.M."/>
        </authorList>
    </citation>
    <scope>NUCLEOTIDE SEQUENCE [LARGE SCALE GENOMIC DNA]</scope>
</reference>
<reference key="5">
    <citation type="submission" date="2005-09" db="EMBL/GenBank/DDBJ databases">
        <authorList>
            <person name="Mural R.J."/>
            <person name="Istrail S."/>
            <person name="Sutton G.G."/>
            <person name="Florea L."/>
            <person name="Halpern A.L."/>
            <person name="Mobarry C.M."/>
            <person name="Lippert R."/>
            <person name="Walenz B."/>
            <person name="Shatkay H."/>
            <person name="Dew I."/>
            <person name="Miller J.R."/>
            <person name="Flanigan M.J."/>
            <person name="Edwards N.J."/>
            <person name="Bolanos R."/>
            <person name="Fasulo D."/>
            <person name="Halldorsson B.V."/>
            <person name="Hannenhalli S."/>
            <person name="Turner R."/>
            <person name="Yooseph S."/>
            <person name="Lu F."/>
            <person name="Nusskern D.R."/>
            <person name="Shue B.C."/>
            <person name="Zheng X.H."/>
            <person name="Zhong F."/>
            <person name="Delcher A.L."/>
            <person name="Huson D.H."/>
            <person name="Kravitz S.A."/>
            <person name="Mouchard L."/>
            <person name="Reinert K."/>
            <person name="Remington K.A."/>
            <person name="Clark A.G."/>
            <person name="Waterman M.S."/>
            <person name="Eichler E.E."/>
            <person name="Adams M.D."/>
            <person name="Hunkapiller M.W."/>
            <person name="Myers E.W."/>
            <person name="Venter J.C."/>
        </authorList>
    </citation>
    <scope>NUCLEOTIDE SEQUENCE [LARGE SCALE GENOMIC DNA]</scope>
</reference>
<gene>
    <name type="primary">PCDHB3</name>
</gene>
<accession>Q9Y5E6</accession>
<accession>B2R8P2</accession>
<evidence type="ECO:0000250" key="1"/>
<evidence type="ECO:0000255" key="2"/>
<evidence type="ECO:0000255" key="3">
    <source>
        <dbReference type="PROSITE-ProRule" id="PRU00043"/>
    </source>
</evidence>
<evidence type="ECO:0000305" key="4"/>
<sequence>MEAGGERFLRQRQVLLLFVFLGGSLAGSESRRYSVAEEKEKGFLIANLAKDLGLRVEELAARGAQVVSKGNKQHFQLSHQTGDLLLNEKLDREELCGPTEPCILHFQILLQNPLQFVTNELRIIDVNDHSPVFFENEMHLKILESTLPGTVIPLGNAEDLDVGRNSLQNYTITPNSHFHVLTRSRRDGRKYPELVLDKALDPEEQPELSLTLTALDGGSPPRSGTAQINIQVLDINDNAPEFAQPLYEVAVLENTPVNSVIVTVSASDLDTGSFGTISYAFFHASEEIRKTFQLNPITGDMQLVKYLNFEAINSYEVDIEAKDGGGLSGKSTVIVQVVDVNDNPPELTLSSVNSPIPENSGETVLAVFSVSDLDSGDNGRVMCSIENNLPFFLKPSVENFYTLVSEGALDRETRSEYNITITITDLGTPRLKTKYNITVLVSDVNDNAPAFTQISYTLFVRENNSPALHIGSVSATDRDSGTNAQVTYSLLPPQDPHLPLSSLVSINADNGHLFALRSLDYEALQAFEFRVGATDRGSPALSSEALVRVLVLDANDNSPFVLYPLQNGSAPCTELVPRAAEPGYLVTKVVAVDGDSGQNAWLSYQLLKATEPGLFGVWAHNGEVRTARLLSERDAAKHRLVVLVKDNGEPPRSATATLHVLLVDGFSQPYLPLPEAAPAQAQADLLTVYLVVALASVSSLFLFSVLLFVAVRLCRRSRAASVGRCSVPEGPFPGQMVDVSGTGTLSQSYQYEVCLTGGSGTNEFKFLKPIIPNFVAQGAERVSEANPSFRKSFEFS</sequence>
<organism>
    <name type="scientific">Homo sapiens</name>
    <name type="common">Human</name>
    <dbReference type="NCBI Taxonomy" id="9606"/>
    <lineage>
        <taxon>Eukaryota</taxon>
        <taxon>Metazoa</taxon>
        <taxon>Chordata</taxon>
        <taxon>Craniata</taxon>
        <taxon>Vertebrata</taxon>
        <taxon>Euteleostomi</taxon>
        <taxon>Mammalia</taxon>
        <taxon>Eutheria</taxon>
        <taxon>Euarchontoglires</taxon>
        <taxon>Primates</taxon>
        <taxon>Haplorrhini</taxon>
        <taxon>Catarrhini</taxon>
        <taxon>Hominidae</taxon>
        <taxon>Homo</taxon>
    </lineage>
</organism>